<proteinExistence type="inferred from homology"/>
<gene>
    <name evidence="1" type="primary">apt</name>
    <name type="ordered locus">Bphyt_0603</name>
</gene>
<reference key="1">
    <citation type="journal article" date="2011" name="J. Bacteriol.">
        <title>Complete genome sequence of the plant growth-promoting endophyte Burkholderia phytofirmans strain PsJN.</title>
        <authorList>
            <person name="Weilharter A."/>
            <person name="Mitter B."/>
            <person name="Shin M.V."/>
            <person name="Chain P.S."/>
            <person name="Nowak J."/>
            <person name="Sessitsch A."/>
        </authorList>
    </citation>
    <scope>NUCLEOTIDE SEQUENCE [LARGE SCALE GENOMIC DNA]</scope>
    <source>
        <strain>DSM 17436 / LMG 22146 / PsJN</strain>
    </source>
</reference>
<evidence type="ECO:0000255" key="1">
    <source>
        <dbReference type="HAMAP-Rule" id="MF_00004"/>
    </source>
</evidence>
<accession>B2SXI3</accession>
<dbReference type="EC" id="2.4.2.7" evidence="1"/>
<dbReference type="EMBL" id="CP001052">
    <property type="protein sequence ID" value="ACD15028.1"/>
    <property type="molecule type" value="Genomic_DNA"/>
</dbReference>
<dbReference type="RefSeq" id="WP_012431666.1">
    <property type="nucleotide sequence ID" value="NC_010681.1"/>
</dbReference>
<dbReference type="SMR" id="B2SXI3"/>
<dbReference type="STRING" id="398527.Bphyt_0603"/>
<dbReference type="KEGG" id="bpy:Bphyt_0603"/>
<dbReference type="eggNOG" id="COG0503">
    <property type="taxonomic scope" value="Bacteria"/>
</dbReference>
<dbReference type="HOGENOM" id="CLU_063339_3_0_4"/>
<dbReference type="OrthoDB" id="9803963at2"/>
<dbReference type="UniPathway" id="UPA00588">
    <property type="reaction ID" value="UER00646"/>
</dbReference>
<dbReference type="Proteomes" id="UP000001739">
    <property type="component" value="Chromosome 1"/>
</dbReference>
<dbReference type="GO" id="GO:0005737">
    <property type="term" value="C:cytoplasm"/>
    <property type="evidence" value="ECO:0007669"/>
    <property type="project" value="UniProtKB-SubCell"/>
</dbReference>
<dbReference type="GO" id="GO:0002055">
    <property type="term" value="F:adenine binding"/>
    <property type="evidence" value="ECO:0007669"/>
    <property type="project" value="TreeGrafter"/>
</dbReference>
<dbReference type="GO" id="GO:0003999">
    <property type="term" value="F:adenine phosphoribosyltransferase activity"/>
    <property type="evidence" value="ECO:0007669"/>
    <property type="project" value="UniProtKB-UniRule"/>
</dbReference>
<dbReference type="GO" id="GO:0016208">
    <property type="term" value="F:AMP binding"/>
    <property type="evidence" value="ECO:0007669"/>
    <property type="project" value="TreeGrafter"/>
</dbReference>
<dbReference type="GO" id="GO:0006168">
    <property type="term" value="P:adenine salvage"/>
    <property type="evidence" value="ECO:0007669"/>
    <property type="project" value="InterPro"/>
</dbReference>
<dbReference type="GO" id="GO:0044209">
    <property type="term" value="P:AMP salvage"/>
    <property type="evidence" value="ECO:0007669"/>
    <property type="project" value="UniProtKB-UniRule"/>
</dbReference>
<dbReference type="GO" id="GO:0006166">
    <property type="term" value="P:purine ribonucleoside salvage"/>
    <property type="evidence" value="ECO:0007669"/>
    <property type="project" value="UniProtKB-KW"/>
</dbReference>
<dbReference type="CDD" id="cd06223">
    <property type="entry name" value="PRTases_typeI"/>
    <property type="match status" value="1"/>
</dbReference>
<dbReference type="FunFam" id="3.40.50.2020:FF:000021">
    <property type="entry name" value="Adenine phosphoribosyltransferase"/>
    <property type="match status" value="1"/>
</dbReference>
<dbReference type="Gene3D" id="3.40.50.2020">
    <property type="match status" value="1"/>
</dbReference>
<dbReference type="HAMAP" id="MF_00004">
    <property type="entry name" value="Aden_phosphoribosyltr"/>
    <property type="match status" value="1"/>
</dbReference>
<dbReference type="InterPro" id="IPR005764">
    <property type="entry name" value="Ade_phspho_trans"/>
</dbReference>
<dbReference type="InterPro" id="IPR000836">
    <property type="entry name" value="PRibTrfase_dom"/>
</dbReference>
<dbReference type="InterPro" id="IPR029057">
    <property type="entry name" value="PRTase-like"/>
</dbReference>
<dbReference type="InterPro" id="IPR050054">
    <property type="entry name" value="UPRTase/APRTase"/>
</dbReference>
<dbReference type="NCBIfam" id="TIGR01090">
    <property type="entry name" value="apt"/>
    <property type="match status" value="1"/>
</dbReference>
<dbReference type="NCBIfam" id="NF002634">
    <property type="entry name" value="PRK02304.1-3"/>
    <property type="match status" value="1"/>
</dbReference>
<dbReference type="NCBIfam" id="NF002636">
    <property type="entry name" value="PRK02304.1-5"/>
    <property type="match status" value="1"/>
</dbReference>
<dbReference type="PANTHER" id="PTHR32315">
    <property type="entry name" value="ADENINE PHOSPHORIBOSYLTRANSFERASE"/>
    <property type="match status" value="1"/>
</dbReference>
<dbReference type="PANTHER" id="PTHR32315:SF3">
    <property type="entry name" value="ADENINE PHOSPHORIBOSYLTRANSFERASE"/>
    <property type="match status" value="1"/>
</dbReference>
<dbReference type="Pfam" id="PF00156">
    <property type="entry name" value="Pribosyltran"/>
    <property type="match status" value="1"/>
</dbReference>
<dbReference type="SUPFAM" id="SSF53271">
    <property type="entry name" value="PRTase-like"/>
    <property type="match status" value="1"/>
</dbReference>
<dbReference type="PROSITE" id="PS00103">
    <property type="entry name" value="PUR_PYR_PR_TRANSFER"/>
    <property type="match status" value="1"/>
</dbReference>
<organism>
    <name type="scientific">Paraburkholderia phytofirmans (strain DSM 17436 / LMG 22146 / PsJN)</name>
    <name type="common">Burkholderia phytofirmans</name>
    <dbReference type="NCBI Taxonomy" id="398527"/>
    <lineage>
        <taxon>Bacteria</taxon>
        <taxon>Pseudomonadati</taxon>
        <taxon>Pseudomonadota</taxon>
        <taxon>Betaproteobacteria</taxon>
        <taxon>Burkholderiales</taxon>
        <taxon>Burkholderiaceae</taxon>
        <taxon>Paraburkholderia</taxon>
    </lineage>
</organism>
<sequence>MSNALASAPLDAADYIKSHIRTVPDWPQPGVQFRDITPLLQEPKSLRVLIDLFVQRYIDAKLDYIAGLDARGFIIGPILAYELNLGFIPIRKAGKLPYKRVAQSYELEYGTATVEIHEDACKPGDRIVIIDDLIATGGTMMAGKILLERLGAVVVEGAAIIDLPELGGSKLLREGGLALYTVTGFDGH</sequence>
<feature type="chain" id="PRO_1000088960" description="Adenine phosphoribosyltransferase">
    <location>
        <begin position="1"/>
        <end position="188"/>
    </location>
</feature>
<protein>
    <recommendedName>
        <fullName evidence="1">Adenine phosphoribosyltransferase</fullName>
        <shortName evidence="1">APRT</shortName>
        <ecNumber evidence="1">2.4.2.7</ecNumber>
    </recommendedName>
</protein>
<name>APT_PARPJ</name>
<keyword id="KW-0963">Cytoplasm</keyword>
<keyword id="KW-0328">Glycosyltransferase</keyword>
<keyword id="KW-0660">Purine salvage</keyword>
<keyword id="KW-0808">Transferase</keyword>
<comment type="function">
    <text evidence="1">Catalyzes a salvage reaction resulting in the formation of AMP, that is energically less costly than de novo synthesis.</text>
</comment>
<comment type="catalytic activity">
    <reaction evidence="1">
        <text>AMP + diphosphate = 5-phospho-alpha-D-ribose 1-diphosphate + adenine</text>
        <dbReference type="Rhea" id="RHEA:16609"/>
        <dbReference type="ChEBI" id="CHEBI:16708"/>
        <dbReference type="ChEBI" id="CHEBI:33019"/>
        <dbReference type="ChEBI" id="CHEBI:58017"/>
        <dbReference type="ChEBI" id="CHEBI:456215"/>
        <dbReference type="EC" id="2.4.2.7"/>
    </reaction>
</comment>
<comment type="pathway">
    <text evidence="1">Purine metabolism; AMP biosynthesis via salvage pathway; AMP from adenine: step 1/1.</text>
</comment>
<comment type="subunit">
    <text evidence="1">Homodimer.</text>
</comment>
<comment type="subcellular location">
    <subcellularLocation>
        <location evidence="1">Cytoplasm</location>
    </subcellularLocation>
</comment>
<comment type="similarity">
    <text evidence="1">Belongs to the purine/pyrimidine phosphoribosyltransferase family.</text>
</comment>